<dbReference type="EMBL" id="CP000918">
    <property type="protein sequence ID" value="ACO17572.1"/>
    <property type="molecule type" value="Genomic_DNA"/>
</dbReference>
<dbReference type="RefSeq" id="WP_000616545.1">
    <property type="nucleotide sequence ID" value="NC_012468.1"/>
</dbReference>
<dbReference type="SMR" id="C1CAM2"/>
<dbReference type="GeneID" id="93738967"/>
<dbReference type="KEGG" id="snm:SP70585_0275"/>
<dbReference type="HOGENOM" id="CLU_095071_2_1_9"/>
<dbReference type="Proteomes" id="UP000002211">
    <property type="component" value="Chromosome"/>
</dbReference>
<dbReference type="GO" id="GO:0022625">
    <property type="term" value="C:cytosolic large ribosomal subunit"/>
    <property type="evidence" value="ECO:0007669"/>
    <property type="project" value="TreeGrafter"/>
</dbReference>
<dbReference type="GO" id="GO:0070180">
    <property type="term" value="F:large ribosomal subunit rRNA binding"/>
    <property type="evidence" value="ECO:0007669"/>
    <property type="project" value="TreeGrafter"/>
</dbReference>
<dbReference type="GO" id="GO:0003735">
    <property type="term" value="F:structural constituent of ribosome"/>
    <property type="evidence" value="ECO:0007669"/>
    <property type="project" value="InterPro"/>
</dbReference>
<dbReference type="GO" id="GO:0006412">
    <property type="term" value="P:translation"/>
    <property type="evidence" value="ECO:0007669"/>
    <property type="project" value="UniProtKB-UniRule"/>
</dbReference>
<dbReference type="CDD" id="cd00337">
    <property type="entry name" value="Ribosomal_uL14"/>
    <property type="match status" value="1"/>
</dbReference>
<dbReference type="FunFam" id="2.40.150.20:FF:000001">
    <property type="entry name" value="50S ribosomal protein L14"/>
    <property type="match status" value="1"/>
</dbReference>
<dbReference type="Gene3D" id="2.40.150.20">
    <property type="entry name" value="Ribosomal protein L14"/>
    <property type="match status" value="1"/>
</dbReference>
<dbReference type="HAMAP" id="MF_01367">
    <property type="entry name" value="Ribosomal_uL14"/>
    <property type="match status" value="1"/>
</dbReference>
<dbReference type="InterPro" id="IPR000218">
    <property type="entry name" value="Ribosomal_uL14"/>
</dbReference>
<dbReference type="InterPro" id="IPR005745">
    <property type="entry name" value="Ribosomal_uL14_bac-type"/>
</dbReference>
<dbReference type="InterPro" id="IPR019972">
    <property type="entry name" value="Ribosomal_uL14_CS"/>
</dbReference>
<dbReference type="InterPro" id="IPR036853">
    <property type="entry name" value="Ribosomal_uL14_sf"/>
</dbReference>
<dbReference type="NCBIfam" id="TIGR01067">
    <property type="entry name" value="rplN_bact"/>
    <property type="match status" value="1"/>
</dbReference>
<dbReference type="PANTHER" id="PTHR11761">
    <property type="entry name" value="50S/60S RIBOSOMAL PROTEIN L14/L23"/>
    <property type="match status" value="1"/>
</dbReference>
<dbReference type="PANTHER" id="PTHR11761:SF3">
    <property type="entry name" value="LARGE RIBOSOMAL SUBUNIT PROTEIN UL14M"/>
    <property type="match status" value="1"/>
</dbReference>
<dbReference type="Pfam" id="PF00238">
    <property type="entry name" value="Ribosomal_L14"/>
    <property type="match status" value="1"/>
</dbReference>
<dbReference type="SMART" id="SM01374">
    <property type="entry name" value="Ribosomal_L14"/>
    <property type="match status" value="1"/>
</dbReference>
<dbReference type="SUPFAM" id="SSF50193">
    <property type="entry name" value="Ribosomal protein L14"/>
    <property type="match status" value="1"/>
</dbReference>
<dbReference type="PROSITE" id="PS00049">
    <property type="entry name" value="RIBOSOMAL_L14"/>
    <property type="match status" value="1"/>
</dbReference>
<proteinExistence type="inferred from homology"/>
<accession>C1CAM2</accession>
<name>RL14_STRP7</name>
<organism>
    <name type="scientific">Streptococcus pneumoniae (strain 70585)</name>
    <dbReference type="NCBI Taxonomy" id="488221"/>
    <lineage>
        <taxon>Bacteria</taxon>
        <taxon>Bacillati</taxon>
        <taxon>Bacillota</taxon>
        <taxon>Bacilli</taxon>
        <taxon>Lactobacillales</taxon>
        <taxon>Streptococcaceae</taxon>
        <taxon>Streptococcus</taxon>
    </lineage>
</organism>
<feature type="chain" id="PRO_1000166939" description="Large ribosomal subunit protein uL14">
    <location>
        <begin position="1"/>
        <end position="122"/>
    </location>
</feature>
<evidence type="ECO:0000255" key="1">
    <source>
        <dbReference type="HAMAP-Rule" id="MF_01367"/>
    </source>
</evidence>
<evidence type="ECO:0000305" key="2"/>
<reference key="1">
    <citation type="journal article" date="2010" name="Genome Biol.">
        <title>Structure and dynamics of the pan-genome of Streptococcus pneumoniae and closely related species.</title>
        <authorList>
            <person name="Donati C."/>
            <person name="Hiller N.L."/>
            <person name="Tettelin H."/>
            <person name="Muzzi A."/>
            <person name="Croucher N.J."/>
            <person name="Angiuoli S.V."/>
            <person name="Oggioni M."/>
            <person name="Dunning Hotopp J.C."/>
            <person name="Hu F.Z."/>
            <person name="Riley D.R."/>
            <person name="Covacci A."/>
            <person name="Mitchell T.J."/>
            <person name="Bentley S.D."/>
            <person name="Kilian M."/>
            <person name="Ehrlich G.D."/>
            <person name="Rappuoli R."/>
            <person name="Moxon E.R."/>
            <person name="Masignani V."/>
        </authorList>
    </citation>
    <scope>NUCLEOTIDE SEQUENCE [LARGE SCALE GENOMIC DNA]</scope>
    <source>
        <strain>70585</strain>
    </source>
</reference>
<protein>
    <recommendedName>
        <fullName evidence="1">Large ribosomal subunit protein uL14</fullName>
    </recommendedName>
    <alternativeName>
        <fullName evidence="2">50S ribosomal protein L14</fullName>
    </alternativeName>
</protein>
<keyword id="KW-0687">Ribonucleoprotein</keyword>
<keyword id="KW-0689">Ribosomal protein</keyword>
<keyword id="KW-0694">RNA-binding</keyword>
<keyword id="KW-0699">rRNA-binding</keyword>
<sequence>MIQTETRLKVADNSGAREILTIKVLGGSGRKFANIGDVIVASVKQATPGGAVKKGDVVKAVIVRTKSGARRADGSYIKFDENAAVIIREDKTPRGTRIFGPVARELREGGFMKIVSLAPEVL</sequence>
<comment type="function">
    <text evidence="1">Binds to 23S rRNA. Forms part of two intersubunit bridges in the 70S ribosome.</text>
</comment>
<comment type="subunit">
    <text evidence="1">Part of the 50S ribosomal subunit. Forms a cluster with proteins L3 and L19. In the 70S ribosome, L14 and L19 interact and together make contacts with the 16S rRNA in bridges B5 and B8.</text>
</comment>
<comment type="similarity">
    <text evidence="1">Belongs to the universal ribosomal protein uL14 family.</text>
</comment>
<gene>
    <name evidence="1" type="primary">rplN</name>
    <name type="ordered locus">SP70585_0275</name>
</gene>